<comment type="function">
    <text evidence="1">Catalyzes the dephosphorylation of undecaprenyl diphosphate (UPP). Confers resistance to bacitracin.</text>
</comment>
<comment type="catalytic activity">
    <reaction evidence="1">
        <text>di-trans,octa-cis-undecaprenyl diphosphate + H2O = di-trans,octa-cis-undecaprenyl phosphate + phosphate + H(+)</text>
        <dbReference type="Rhea" id="RHEA:28094"/>
        <dbReference type="ChEBI" id="CHEBI:15377"/>
        <dbReference type="ChEBI" id="CHEBI:15378"/>
        <dbReference type="ChEBI" id="CHEBI:43474"/>
        <dbReference type="ChEBI" id="CHEBI:58405"/>
        <dbReference type="ChEBI" id="CHEBI:60392"/>
        <dbReference type="EC" id="3.6.1.27"/>
    </reaction>
</comment>
<comment type="subcellular location">
    <subcellularLocation>
        <location evidence="1">Cell membrane</location>
        <topology evidence="1">Multi-pass membrane protein</topology>
    </subcellularLocation>
</comment>
<comment type="miscellaneous">
    <text>Bacitracin is thought to be involved in the inhibition of peptidoglycan synthesis by sequestering undecaprenyl diphosphate, thereby reducing the pool of lipid carrier available.</text>
</comment>
<comment type="similarity">
    <text evidence="1">Belongs to the UppP family.</text>
</comment>
<evidence type="ECO:0000255" key="1">
    <source>
        <dbReference type="HAMAP-Rule" id="MF_01006"/>
    </source>
</evidence>
<organism>
    <name type="scientific">Staphylococcus epidermidis (strain ATCC 12228 / FDA PCI 1200)</name>
    <dbReference type="NCBI Taxonomy" id="176280"/>
    <lineage>
        <taxon>Bacteria</taxon>
        <taxon>Bacillati</taxon>
        <taxon>Bacillota</taxon>
        <taxon>Bacilli</taxon>
        <taxon>Bacillales</taxon>
        <taxon>Staphylococcaceae</taxon>
        <taxon>Staphylococcus</taxon>
    </lineage>
</organism>
<protein>
    <recommendedName>
        <fullName evidence="1">Undecaprenyl-diphosphatase</fullName>
        <ecNumber evidence="1">3.6.1.27</ecNumber>
    </recommendedName>
    <alternativeName>
        <fullName evidence="1">Bacitracin resistance protein</fullName>
    </alternativeName>
    <alternativeName>
        <fullName evidence="1">Undecaprenyl pyrophosphate phosphatase</fullName>
    </alternativeName>
</protein>
<dbReference type="EC" id="3.6.1.27" evidence="1"/>
<dbReference type="EMBL" id="AE015929">
    <property type="protein sequence ID" value="AAO04051.1"/>
    <property type="molecule type" value="Genomic_DNA"/>
</dbReference>
<dbReference type="RefSeq" id="NP_764009.1">
    <property type="nucleotide sequence ID" value="NC_004461.1"/>
</dbReference>
<dbReference type="RefSeq" id="WP_001832082.1">
    <property type="nucleotide sequence ID" value="NZ_WBME01000018.1"/>
</dbReference>
<dbReference type="SMR" id="Q8CTJ6"/>
<dbReference type="KEGG" id="sep:SE_0454"/>
<dbReference type="PATRIC" id="fig|176280.10.peg.428"/>
<dbReference type="eggNOG" id="COG1968">
    <property type="taxonomic scope" value="Bacteria"/>
</dbReference>
<dbReference type="HOGENOM" id="CLU_060296_2_0_9"/>
<dbReference type="OrthoDB" id="9808289at2"/>
<dbReference type="Proteomes" id="UP000001411">
    <property type="component" value="Chromosome"/>
</dbReference>
<dbReference type="GO" id="GO:0005886">
    <property type="term" value="C:plasma membrane"/>
    <property type="evidence" value="ECO:0007669"/>
    <property type="project" value="UniProtKB-SubCell"/>
</dbReference>
<dbReference type="GO" id="GO:0050380">
    <property type="term" value="F:undecaprenyl-diphosphatase activity"/>
    <property type="evidence" value="ECO:0007669"/>
    <property type="project" value="UniProtKB-UniRule"/>
</dbReference>
<dbReference type="GO" id="GO:0071555">
    <property type="term" value="P:cell wall organization"/>
    <property type="evidence" value="ECO:0007669"/>
    <property type="project" value="UniProtKB-KW"/>
</dbReference>
<dbReference type="GO" id="GO:0009252">
    <property type="term" value="P:peptidoglycan biosynthetic process"/>
    <property type="evidence" value="ECO:0007669"/>
    <property type="project" value="UniProtKB-KW"/>
</dbReference>
<dbReference type="GO" id="GO:0008360">
    <property type="term" value="P:regulation of cell shape"/>
    <property type="evidence" value="ECO:0007669"/>
    <property type="project" value="UniProtKB-KW"/>
</dbReference>
<dbReference type="GO" id="GO:0046677">
    <property type="term" value="P:response to antibiotic"/>
    <property type="evidence" value="ECO:0007669"/>
    <property type="project" value="UniProtKB-UniRule"/>
</dbReference>
<dbReference type="HAMAP" id="MF_01006">
    <property type="entry name" value="Undec_diphosphatase"/>
    <property type="match status" value="1"/>
</dbReference>
<dbReference type="InterPro" id="IPR003824">
    <property type="entry name" value="UppP"/>
</dbReference>
<dbReference type="NCBIfam" id="NF001390">
    <property type="entry name" value="PRK00281.1-4"/>
    <property type="match status" value="1"/>
</dbReference>
<dbReference type="NCBIfam" id="TIGR00753">
    <property type="entry name" value="undec_PP_bacA"/>
    <property type="match status" value="1"/>
</dbReference>
<dbReference type="PANTHER" id="PTHR30622">
    <property type="entry name" value="UNDECAPRENYL-DIPHOSPHATASE"/>
    <property type="match status" value="1"/>
</dbReference>
<dbReference type="PANTHER" id="PTHR30622:SF3">
    <property type="entry name" value="UNDECAPRENYL-DIPHOSPHATASE"/>
    <property type="match status" value="1"/>
</dbReference>
<dbReference type="Pfam" id="PF02673">
    <property type="entry name" value="BacA"/>
    <property type="match status" value="1"/>
</dbReference>
<name>UPPP_STAES</name>
<proteinExistence type="inferred from homology"/>
<reference key="1">
    <citation type="journal article" date="2003" name="Mol. Microbiol.">
        <title>Genome-based analysis of virulence genes in a non-biofilm-forming Staphylococcus epidermidis strain (ATCC 12228).</title>
        <authorList>
            <person name="Zhang Y.-Q."/>
            <person name="Ren S.-X."/>
            <person name="Li H.-L."/>
            <person name="Wang Y.-X."/>
            <person name="Fu G."/>
            <person name="Yang J."/>
            <person name="Qin Z.-Q."/>
            <person name="Miao Y.-G."/>
            <person name="Wang W.-Y."/>
            <person name="Chen R.-S."/>
            <person name="Shen Y."/>
            <person name="Chen Z."/>
            <person name="Yuan Z.-H."/>
            <person name="Zhao G.-P."/>
            <person name="Qu D."/>
            <person name="Danchin A."/>
            <person name="Wen Y.-M."/>
        </authorList>
    </citation>
    <scope>NUCLEOTIDE SEQUENCE [LARGE SCALE GENOMIC DNA]</scope>
    <source>
        <strain>ATCC 12228 / FDA PCI 1200</strain>
    </source>
</reference>
<feature type="chain" id="PRO_0000151205" description="Undecaprenyl-diphosphatase">
    <location>
        <begin position="1"/>
        <end position="290"/>
    </location>
</feature>
<feature type="transmembrane region" description="Helical" evidence="1">
    <location>
        <begin position="1"/>
        <end position="21"/>
    </location>
</feature>
<feature type="transmembrane region" description="Helical" evidence="1">
    <location>
        <begin position="48"/>
        <end position="68"/>
    </location>
</feature>
<feature type="transmembrane region" description="Helical" evidence="1">
    <location>
        <begin position="101"/>
        <end position="121"/>
    </location>
</feature>
<feature type="transmembrane region" description="Helical" evidence="1">
    <location>
        <begin position="125"/>
        <end position="145"/>
    </location>
</feature>
<feature type="transmembrane region" description="Helical" evidence="1">
    <location>
        <begin position="161"/>
        <end position="181"/>
    </location>
</feature>
<feature type="transmembrane region" description="Helical" evidence="1">
    <location>
        <begin position="202"/>
        <end position="222"/>
    </location>
</feature>
<feature type="transmembrane region" description="Helical" evidence="1">
    <location>
        <begin position="231"/>
        <end position="251"/>
    </location>
</feature>
<feature type="transmembrane region" description="Helical" evidence="1">
    <location>
        <begin position="266"/>
        <end position="286"/>
    </location>
</feature>
<keyword id="KW-0046">Antibiotic resistance</keyword>
<keyword id="KW-1003">Cell membrane</keyword>
<keyword id="KW-0133">Cell shape</keyword>
<keyword id="KW-0961">Cell wall biogenesis/degradation</keyword>
<keyword id="KW-0378">Hydrolase</keyword>
<keyword id="KW-0472">Membrane</keyword>
<keyword id="KW-0573">Peptidoglycan synthesis</keyword>
<keyword id="KW-0812">Transmembrane</keyword>
<keyword id="KW-1133">Transmembrane helix</keyword>
<gene>
    <name evidence="1" type="primary">uppP</name>
    <name type="synonym">bacA</name>
    <name type="synonym">upk</name>
    <name type="ordered locus">SE_0454</name>
</gene>
<accession>Q8CTJ6</accession>
<sequence length="290" mass="32212">MFLLELIKGIILGIVEGLTEFAPVSSTGHMILVDDMWLKSTNFLGSQSAFTFKVVIQLGSVFAAAWVFRERFLEILHIGQHKPEPSTSGDRRSKPRRLNLIHVLVGMVPAGILGFLFDDLIEKYLFSVPTVLIGLFIGAIYMIIADKYSKTVQHPQTVDQINYFQAFVIGISQAIAMWPGFSRSGSTISTGVLMKLNHKAASDFTFIMSVPIMLAASGLSLLKHYEYIHLAHIPFYILGFLAAFIVGLIAIKTFLHLINKVKLVPFAIYRIVLVIFIAILYFGFGIGKGI</sequence>